<organism>
    <name type="scientific">Dehalococcoides mccartyi (strain CBDB1)</name>
    <dbReference type="NCBI Taxonomy" id="255470"/>
    <lineage>
        <taxon>Bacteria</taxon>
        <taxon>Bacillati</taxon>
        <taxon>Chloroflexota</taxon>
        <taxon>Dehalococcoidia</taxon>
        <taxon>Dehalococcoidales</taxon>
        <taxon>Dehalococcoidaceae</taxon>
        <taxon>Dehalococcoides</taxon>
    </lineage>
</organism>
<sequence length="582" mass="67061">MANQIDESKPISDLEIMRHSAAHIMAEAVLSMFPEAKLGIGPAIDTGFYYDFDLPRTLTPEDLPEIETRMNQLVKSNLPFRREEMSKDEARKLFANQPYKLELLNDITDETVSIYRQGNFCDLCRGPHVNYTSKVKAFKLLSIAGAYWRGDEKRPMLQRIYGAAFLDKASLAEYLNMLEEAAKRDHRKLGKELELFSLHQEIGGGLVNWLPNGAIVRHLIEEFWKKEHLKRGYDLVYTPHIAKVDLWKTSGHWGFYRENMYSPMDIDGEEYVLKPMNCVYHILMFKNRTRSYKELPIRMAELGTVYRYERSGVLHGLSRVRGFTQDDAHIFCLYDQLEKEVVKVLDLAKFMIDTFGFTKYKVMLSTRPEKYVGELDKWEYATDILAKALEANQIPYQVDPGEGVFYGPKIDIKFEDALGRTWQGPTIQVDFQLPERFDVSVVGEDGKDQPVAMVHRTVLGSMERFMSCLTEQYGGAFPAWLSPKQVMVIPIADRHTEFAEKLACELREEEVRVEVDSRSETMNQKIRQAQLAKIPYMLVVGDKEIETQSVAVRTRTGSQQVMPFAEFKSMLLAKIKTKSTEI</sequence>
<name>SYT_DEHMC</name>
<gene>
    <name evidence="1" type="primary">thrS</name>
    <name type="ordered locus">cbdbA726</name>
</gene>
<protein>
    <recommendedName>
        <fullName evidence="1">Threonine--tRNA ligase</fullName>
        <ecNumber evidence="1">6.1.1.3</ecNumber>
    </recommendedName>
    <alternativeName>
        <fullName evidence="1">Threonyl-tRNA synthetase</fullName>
        <shortName evidence="1">ThrRS</shortName>
    </alternativeName>
</protein>
<keyword id="KW-0030">Aminoacyl-tRNA synthetase</keyword>
<keyword id="KW-0067">ATP-binding</keyword>
<keyword id="KW-0963">Cytoplasm</keyword>
<keyword id="KW-0436">Ligase</keyword>
<keyword id="KW-0479">Metal-binding</keyword>
<keyword id="KW-0547">Nucleotide-binding</keyword>
<keyword id="KW-0648">Protein biosynthesis</keyword>
<keyword id="KW-0694">RNA-binding</keyword>
<keyword id="KW-0820">tRNA-binding</keyword>
<keyword id="KW-0862">Zinc</keyword>
<proteinExistence type="inferred from homology"/>
<feature type="chain" id="PRO_1000020380" description="Threonine--tRNA ligase">
    <location>
        <begin position="1"/>
        <end position="582"/>
    </location>
</feature>
<feature type="region of interest" description="Catalytic" evidence="1">
    <location>
        <begin position="185"/>
        <end position="478"/>
    </location>
</feature>
<feature type="binding site" evidence="1">
    <location>
        <position position="278"/>
    </location>
    <ligand>
        <name>Zn(2+)</name>
        <dbReference type="ChEBI" id="CHEBI:29105"/>
    </ligand>
</feature>
<feature type="binding site" evidence="1">
    <location>
        <position position="329"/>
    </location>
    <ligand>
        <name>Zn(2+)</name>
        <dbReference type="ChEBI" id="CHEBI:29105"/>
    </ligand>
</feature>
<feature type="binding site" evidence="1">
    <location>
        <position position="455"/>
    </location>
    <ligand>
        <name>Zn(2+)</name>
        <dbReference type="ChEBI" id="CHEBI:29105"/>
    </ligand>
</feature>
<evidence type="ECO:0000255" key="1">
    <source>
        <dbReference type="HAMAP-Rule" id="MF_00184"/>
    </source>
</evidence>
<accession>Q3ZXB5</accession>
<comment type="function">
    <text evidence="1">Catalyzes the attachment of threonine to tRNA(Thr) in a two-step reaction: L-threonine is first activated by ATP to form Thr-AMP and then transferred to the acceptor end of tRNA(Thr). Also edits incorrectly charged L-seryl-tRNA(Thr).</text>
</comment>
<comment type="catalytic activity">
    <reaction evidence="1">
        <text>tRNA(Thr) + L-threonine + ATP = L-threonyl-tRNA(Thr) + AMP + diphosphate + H(+)</text>
        <dbReference type="Rhea" id="RHEA:24624"/>
        <dbReference type="Rhea" id="RHEA-COMP:9670"/>
        <dbReference type="Rhea" id="RHEA-COMP:9704"/>
        <dbReference type="ChEBI" id="CHEBI:15378"/>
        <dbReference type="ChEBI" id="CHEBI:30616"/>
        <dbReference type="ChEBI" id="CHEBI:33019"/>
        <dbReference type="ChEBI" id="CHEBI:57926"/>
        <dbReference type="ChEBI" id="CHEBI:78442"/>
        <dbReference type="ChEBI" id="CHEBI:78534"/>
        <dbReference type="ChEBI" id="CHEBI:456215"/>
        <dbReference type="EC" id="6.1.1.3"/>
    </reaction>
</comment>
<comment type="cofactor">
    <cofactor evidence="1">
        <name>Zn(2+)</name>
        <dbReference type="ChEBI" id="CHEBI:29105"/>
    </cofactor>
    <text evidence="1">Binds 1 zinc ion per subunit.</text>
</comment>
<comment type="subunit">
    <text evidence="1">Homodimer.</text>
</comment>
<comment type="subcellular location">
    <subcellularLocation>
        <location evidence="1">Cytoplasm</location>
    </subcellularLocation>
</comment>
<comment type="similarity">
    <text evidence="1">Belongs to the class-II aminoacyl-tRNA synthetase family.</text>
</comment>
<reference key="1">
    <citation type="journal article" date="2005" name="Nat. Biotechnol.">
        <title>Genome sequence of the chlorinated compound-respiring bacterium Dehalococcoides species strain CBDB1.</title>
        <authorList>
            <person name="Kube M."/>
            <person name="Beck A."/>
            <person name="Zinder S.H."/>
            <person name="Kuhl H."/>
            <person name="Reinhardt R."/>
            <person name="Adrian L."/>
        </authorList>
    </citation>
    <scope>NUCLEOTIDE SEQUENCE [LARGE SCALE GENOMIC DNA]</scope>
    <source>
        <strain>CBDB1</strain>
    </source>
</reference>
<dbReference type="EC" id="6.1.1.3" evidence="1"/>
<dbReference type="EMBL" id="AJ965256">
    <property type="protein sequence ID" value="CAI82888.1"/>
    <property type="molecule type" value="Genomic_DNA"/>
</dbReference>
<dbReference type="RefSeq" id="WP_011309239.1">
    <property type="nucleotide sequence ID" value="NC_007356.1"/>
</dbReference>
<dbReference type="SMR" id="Q3ZXB5"/>
<dbReference type="KEGG" id="deh:cbdbA726"/>
<dbReference type="HOGENOM" id="CLU_008554_0_1_0"/>
<dbReference type="Proteomes" id="UP000000433">
    <property type="component" value="Chromosome"/>
</dbReference>
<dbReference type="GO" id="GO:0005737">
    <property type="term" value="C:cytoplasm"/>
    <property type="evidence" value="ECO:0007669"/>
    <property type="project" value="UniProtKB-SubCell"/>
</dbReference>
<dbReference type="GO" id="GO:0005524">
    <property type="term" value="F:ATP binding"/>
    <property type="evidence" value="ECO:0007669"/>
    <property type="project" value="UniProtKB-UniRule"/>
</dbReference>
<dbReference type="GO" id="GO:0046872">
    <property type="term" value="F:metal ion binding"/>
    <property type="evidence" value="ECO:0007669"/>
    <property type="project" value="UniProtKB-KW"/>
</dbReference>
<dbReference type="GO" id="GO:0004829">
    <property type="term" value="F:threonine-tRNA ligase activity"/>
    <property type="evidence" value="ECO:0007669"/>
    <property type="project" value="UniProtKB-UniRule"/>
</dbReference>
<dbReference type="GO" id="GO:0000049">
    <property type="term" value="F:tRNA binding"/>
    <property type="evidence" value="ECO:0007669"/>
    <property type="project" value="UniProtKB-KW"/>
</dbReference>
<dbReference type="GO" id="GO:0006435">
    <property type="term" value="P:threonyl-tRNA aminoacylation"/>
    <property type="evidence" value="ECO:0007669"/>
    <property type="project" value="UniProtKB-UniRule"/>
</dbReference>
<dbReference type="CDD" id="cd00860">
    <property type="entry name" value="ThrRS_anticodon"/>
    <property type="match status" value="1"/>
</dbReference>
<dbReference type="CDD" id="cd00771">
    <property type="entry name" value="ThrRS_core"/>
    <property type="match status" value="1"/>
</dbReference>
<dbReference type="FunFam" id="3.30.54.20:FF:000002">
    <property type="entry name" value="Threonine--tRNA ligase"/>
    <property type="match status" value="1"/>
</dbReference>
<dbReference type="FunFam" id="3.30.930.10:FF:000002">
    <property type="entry name" value="Threonine--tRNA ligase"/>
    <property type="match status" value="1"/>
</dbReference>
<dbReference type="FunFam" id="3.40.50.800:FF:000001">
    <property type="entry name" value="Threonine--tRNA ligase"/>
    <property type="match status" value="1"/>
</dbReference>
<dbReference type="FunFam" id="3.30.980.10:FF:000005">
    <property type="entry name" value="Threonyl-tRNA synthetase, mitochondrial"/>
    <property type="match status" value="1"/>
</dbReference>
<dbReference type="Gene3D" id="3.30.54.20">
    <property type="match status" value="1"/>
</dbReference>
<dbReference type="Gene3D" id="3.40.50.800">
    <property type="entry name" value="Anticodon-binding domain"/>
    <property type="match status" value="1"/>
</dbReference>
<dbReference type="Gene3D" id="3.30.930.10">
    <property type="entry name" value="Bira Bifunctional Protein, Domain 2"/>
    <property type="match status" value="1"/>
</dbReference>
<dbReference type="Gene3D" id="3.30.980.10">
    <property type="entry name" value="Threonyl-trna Synthetase, Chain A, domain 2"/>
    <property type="match status" value="1"/>
</dbReference>
<dbReference type="HAMAP" id="MF_00184">
    <property type="entry name" value="Thr_tRNA_synth"/>
    <property type="match status" value="1"/>
</dbReference>
<dbReference type="InterPro" id="IPR002314">
    <property type="entry name" value="aa-tRNA-synt_IIb"/>
</dbReference>
<dbReference type="InterPro" id="IPR006195">
    <property type="entry name" value="aa-tRNA-synth_II"/>
</dbReference>
<dbReference type="InterPro" id="IPR045864">
    <property type="entry name" value="aa-tRNA-synth_II/BPL/LPL"/>
</dbReference>
<dbReference type="InterPro" id="IPR004154">
    <property type="entry name" value="Anticodon-bd"/>
</dbReference>
<dbReference type="InterPro" id="IPR036621">
    <property type="entry name" value="Anticodon-bd_dom_sf"/>
</dbReference>
<dbReference type="InterPro" id="IPR002320">
    <property type="entry name" value="Thr-tRNA-ligase_IIa"/>
</dbReference>
<dbReference type="InterPro" id="IPR018163">
    <property type="entry name" value="Thr/Ala-tRNA-synth_IIc_edit"/>
</dbReference>
<dbReference type="InterPro" id="IPR047246">
    <property type="entry name" value="ThrRS_anticodon"/>
</dbReference>
<dbReference type="InterPro" id="IPR033728">
    <property type="entry name" value="ThrRS_core"/>
</dbReference>
<dbReference type="InterPro" id="IPR012947">
    <property type="entry name" value="tRNA_SAD"/>
</dbReference>
<dbReference type="NCBIfam" id="TIGR00418">
    <property type="entry name" value="thrS"/>
    <property type="match status" value="1"/>
</dbReference>
<dbReference type="PANTHER" id="PTHR11451:SF44">
    <property type="entry name" value="THREONINE--TRNA LIGASE, CHLOROPLASTIC_MITOCHONDRIAL 2"/>
    <property type="match status" value="1"/>
</dbReference>
<dbReference type="PANTHER" id="PTHR11451">
    <property type="entry name" value="THREONINE-TRNA LIGASE"/>
    <property type="match status" value="1"/>
</dbReference>
<dbReference type="Pfam" id="PF03129">
    <property type="entry name" value="HGTP_anticodon"/>
    <property type="match status" value="1"/>
</dbReference>
<dbReference type="Pfam" id="PF00587">
    <property type="entry name" value="tRNA-synt_2b"/>
    <property type="match status" value="1"/>
</dbReference>
<dbReference type="Pfam" id="PF07973">
    <property type="entry name" value="tRNA_SAD"/>
    <property type="match status" value="1"/>
</dbReference>
<dbReference type="PRINTS" id="PR01047">
    <property type="entry name" value="TRNASYNTHTHR"/>
</dbReference>
<dbReference type="SMART" id="SM00863">
    <property type="entry name" value="tRNA_SAD"/>
    <property type="match status" value="1"/>
</dbReference>
<dbReference type="SUPFAM" id="SSF52954">
    <property type="entry name" value="Class II aaRS ABD-related"/>
    <property type="match status" value="1"/>
</dbReference>
<dbReference type="SUPFAM" id="SSF55681">
    <property type="entry name" value="Class II aaRS and biotin synthetases"/>
    <property type="match status" value="1"/>
</dbReference>
<dbReference type="SUPFAM" id="SSF55186">
    <property type="entry name" value="ThrRS/AlaRS common domain"/>
    <property type="match status" value="1"/>
</dbReference>
<dbReference type="PROSITE" id="PS50862">
    <property type="entry name" value="AA_TRNA_LIGASE_II"/>
    <property type="match status" value="1"/>
</dbReference>